<organism>
    <name type="scientific">Pongo abelii</name>
    <name type="common">Sumatran orangutan</name>
    <name type="synonym">Pongo pygmaeus abelii</name>
    <dbReference type="NCBI Taxonomy" id="9601"/>
    <lineage>
        <taxon>Eukaryota</taxon>
        <taxon>Metazoa</taxon>
        <taxon>Chordata</taxon>
        <taxon>Craniata</taxon>
        <taxon>Vertebrata</taxon>
        <taxon>Euteleostomi</taxon>
        <taxon>Mammalia</taxon>
        <taxon>Eutheria</taxon>
        <taxon>Euarchontoglires</taxon>
        <taxon>Primates</taxon>
        <taxon>Haplorrhini</taxon>
        <taxon>Catarrhini</taxon>
        <taxon>Hominidae</taxon>
        <taxon>Pongo</taxon>
    </lineage>
</organism>
<accession>Q5RD18</accession>
<reference key="1">
    <citation type="submission" date="2004-11" db="EMBL/GenBank/DDBJ databases">
        <authorList>
            <consortium name="The German cDNA consortium"/>
        </authorList>
    </citation>
    <scope>NUCLEOTIDE SEQUENCE [LARGE SCALE MRNA]</scope>
    <source>
        <tissue>Brain cortex</tissue>
    </source>
</reference>
<name>SMAP_PONAB</name>
<evidence type="ECO:0000250" key="1">
    <source>
        <dbReference type="UniProtKB" id="O00193"/>
    </source>
</evidence>
<evidence type="ECO:0000256" key="2">
    <source>
        <dbReference type="SAM" id="MobiDB-lite"/>
    </source>
</evidence>
<evidence type="ECO:0000305" key="3"/>
<comment type="similarity">
    <text evidence="3">Belongs to the SMAP family.</text>
</comment>
<feature type="chain" id="PRO_0000263658" description="Small acidic protein">
    <location>
        <begin position="1"/>
        <end position="183"/>
    </location>
</feature>
<feature type="region of interest" description="Disordered" evidence="2">
    <location>
        <begin position="1"/>
        <end position="183"/>
    </location>
</feature>
<feature type="compositionally biased region" description="Basic and acidic residues" evidence="2">
    <location>
        <begin position="48"/>
        <end position="78"/>
    </location>
</feature>
<feature type="compositionally biased region" description="Acidic residues" evidence="2">
    <location>
        <begin position="106"/>
        <end position="149"/>
    </location>
</feature>
<feature type="compositionally biased region" description="Basic and acidic residues" evidence="2">
    <location>
        <begin position="153"/>
        <end position="171"/>
    </location>
</feature>
<feature type="modified residue" description="Phosphoserine" evidence="1">
    <location>
        <position position="15"/>
    </location>
</feature>
<feature type="modified residue" description="Phosphoserine" evidence="1">
    <location>
        <position position="17"/>
    </location>
</feature>
<feature type="modified residue" description="Phosphoserine" evidence="1">
    <location>
        <position position="63"/>
    </location>
</feature>
<feature type="modified residue" description="Phosphoserine" evidence="1">
    <location>
        <position position="87"/>
    </location>
</feature>
<feature type="modified residue" description="Phosphoserine" evidence="1">
    <location>
        <position position="127"/>
    </location>
</feature>
<feature type="modified residue" description="Phosphoserine" evidence="1">
    <location>
        <position position="147"/>
    </location>
</feature>
<feature type="modified residue" description="N6-acetyllysine" evidence="1">
    <location>
        <position position="174"/>
    </location>
</feature>
<feature type="modified residue" description="N6-acetyllysine" evidence="1">
    <location>
        <position position="179"/>
    </location>
</feature>
<feature type="cross-link" description="Glycyl lysine isopeptide (Lys-Gly) (interchain with G-Cter in SUMO2)" evidence="1">
    <location>
        <position position="13"/>
    </location>
</feature>
<feature type="cross-link" description="Glycyl lysine isopeptide (Lys-Gly) (interchain with G-Cter in SUMO2)" evidence="1">
    <location>
        <position position="62"/>
    </location>
</feature>
<feature type="cross-link" description="Glycyl lysine isopeptide (Lys-Gly) (interchain with G-Cter in SUMO2)" evidence="1">
    <location>
        <position position="75"/>
    </location>
</feature>
<gene>
    <name type="primary">SMAP</name>
</gene>
<protein>
    <recommendedName>
        <fullName>Small acidic protein</fullName>
    </recommendedName>
</protein>
<proteinExistence type="evidence at transcript level"/>
<sequence>MSAARESHPHGVKRSASPDDDLGSSNWEAADLGNEERKQKFLRLMGAGKKEHTGRLVIGDHKSTSHFRTGEEDKKINEELESQYQQSMDSKLSGRYRRHCGLGFSEVEDHDGEGDVAGDDDDNDDDSPDPESPDDSESDSESEKEESAEELQAAEHPDEVEDPKNKKDAKSNYKMMFVKSSGS</sequence>
<dbReference type="EMBL" id="CR858100">
    <property type="protein sequence ID" value="CAH90339.1"/>
    <property type="molecule type" value="mRNA"/>
</dbReference>
<dbReference type="RefSeq" id="NP_001125161.1">
    <property type="nucleotide sequence ID" value="NM_001131689.1"/>
</dbReference>
<dbReference type="FunCoup" id="Q5RD18">
    <property type="interactions" value="843"/>
</dbReference>
<dbReference type="STRING" id="9601.ENSPPYP00000003971"/>
<dbReference type="GeneID" id="100172048"/>
<dbReference type="KEGG" id="pon:100172048"/>
<dbReference type="CTD" id="119971854"/>
<dbReference type="eggNOG" id="ENOG502RXI1">
    <property type="taxonomic scope" value="Eukaryota"/>
</dbReference>
<dbReference type="InParanoid" id="Q5RD18"/>
<dbReference type="OrthoDB" id="10066125at2759"/>
<dbReference type="Proteomes" id="UP000001595">
    <property type="component" value="Unplaced"/>
</dbReference>
<dbReference type="InterPro" id="IPR026714">
    <property type="entry name" value="SMAP"/>
</dbReference>
<dbReference type="InterPro" id="IPR028124">
    <property type="entry name" value="SMAP_dom"/>
</dbReference>
<dbReference type="PANTHER" id="PTHR22175:SF0">
    <property type="entry name" value="SMALL ACIDIC PROTEIN"/>
    <property type="match status" value="1"/>
</dbReference>
<dbReference type="PANTHER" id="PTHR22175">
    <property type="entry name" value="SMALL ACIDIC PROTEIN-RELATED"/>
    <property type="match status" value="1"/>
</dbReference>
<dbReference type="Pfam" id="PF15477">
    <property type="entry name" value="SMAP"/>
    <property type="match status" value="1"/>
</dbReference>
<keyword id="KW-0007">Acetylation</keyword>
<keyword id="KW-1017">Isopeptide bond</keyword>
<keyword id="KW-0597">Phosphoprotein</keyword>
<keyword id="KW-1185">Reference proteome</keyword>
<keyword id="KW-0832">Ubl conjugation</keyword>